<dbReference type="EMBL" id="AE007869">
    <property type="protein sequence ID" value="AAK87044.2"/>
    <property type="molecule type" value="Genomic_DNA"/>
</dbReference>
<dbReference type="PIR" id="AB2730">
    <property type="entry name" value="AB2730"/>
</dbReference>
<dbReference type="PIR" id="C97511">
    <property type="entry name" value="C97511"/>
</dbReference>
<dbReference type="RefSeq" id="NP_354259.2">
    <property type="nucleotide sequence ID" value="NC_003062.2"/>
</dbReference>
<dbReference type="RefSeq" id="WP_006312738.1">
    <property type="nucleotide sequence ID" value="NC_003062.2"/>
</dbReference>
<dbReference type="SMR" id="Q8UFZ7"/>
<dbReference type="STRING" id="176299.Atu1247"/>
<dbReference type="EnsemblBacteria" id="AAK87044">
    <property type="protein sequence ID" value="AAK87044"/>
    <property type="gene ID" value="Atu1247"/>
</dbReference>
<dbReference type="GeneID" id="1133285"/>
<dbReference type="KEGG" id="atu:Atu1247"/>
<dbReference type="PATRIC" id="fig|176299.10.peg.1268"/>
<dbReference type="eggNOG" id="COG0102">
    <property type="taxonomic scope" value="Bacteria"/>
</dbReference>
<dbReference type="HOGENOM" id="CLU_082184_2_0_5"/>
<dbReference type="OrthoDB" id="9801330at2"/>
<dbReference type="PhylomeDB" id="Q8UFZ7"/>
<dbReference type="BioCyc" id="AGRO:ATU1247-MONOMER"/>
<dbReference type="Proteomes" id="UP000000813">
    <property type="component" value="Chromosome circular"/>
</dbReference>
<dbReference type="GO" id="GO:0022625">
    <property type="term" value="C:cytosolic large ribosomal subunit"/>
    <property type="evidence" value="ECO:0007669"/>
    <property type="project" value="TreeGrafter"/>
</dbReference>
<dbReference type="GO" id="GO:0003729">
    <property type="term" value="F:mRNA binding"/>
    <property type="evidence" value="ECO:0007669"/>
    <property type="project" value="TreeGrafter"/>
</dbReference>
<dbReference type="GO" id="GO:0003735">
    <property type="term" value="F:structural constituent of ribosome"/>
    <property type="evidence" value="ECO:0007669"/>
    <property type="project" value="InterPro"/>
</dbReference>
<dbReference type="GO" id="GO:0017148">
    <property type="term" value="P:negative regulation of translation"/>
    <property type="evidence" value="ECO:0007669"/>
    <property type="project" value="TreeGrafter"/>
</dbReference>
<dbReference type="GO" id="GO:0006412">
    <property type="term" value="P:translation"/>
    <property type="evidence" value="ECO:0007669"/>
    <property type="project" value="UniProtKB-UniRule"/>
</dbReference>
<dbReference type="CDD" id="cd00392">
    <property type="entry name" value="Ribosomal_L13"/>
    <property type="match status" value="1"/>
</dbReference>
<dbReference type="FunFam" id="3.90.1180.10:FF:000001">
    <property type="entry name" value="50S ribosomal protein L13"/>
    <property type="match status" value="1"/>
</dbReference>
<dbReference type="Gene3D" id="3.90.1180.10">
    <property type="entry name" value="Ribosomal protein L13"/>
    <property type="match status" value="1"/>
</dbReference>
<dbReference type="HAMAP" id="MF_01366">
    <property type="entry name" value="Ribosomal_uL13"/>
    <property type="match status" value="1"/>
</dbReference>
<dbReference type="InterPro" id="IPR005822">
    <property type="entry name" value="Ribosomal_uL13"/>
</dbReference>
<dbReference type="InterPro" id="IPR005823">
    <property type="entry name" value="Ribosomal_uL13_bac-type"/>
</dbReference>
<dbReference type="InterPro" id="IPR036899">
    <property type="entry name" value="Ribosomal_uL13_sf"/>
</dbReference>
<dbReference type="NCBIfam" id="TIGR01066">
    <property type="entry name" value="rplM_bact"/>
    <property type="match status" value="1"/>
</dbReference>
<dbReference type="PANTHER" id="PTHR11545:SF2">
    <property type="entry name" value="LARGE RIBOSOMAL SUBUNIT PROTEIN UL13M"/>
    <property type="match status" value="1"/>
</dbReference>
<dbReference type="PANTHER" id="PTHR11545">
    <property type="entry name" value="RIBOSOMAL PROTEIN L13"/>
    <property type="match status" value="1"/>
</dbReference>
<dbReference type="Pfam" id="PF00572">
    <property type="entry name" value="Ribosomal_L13"/>
    <property type="match status" value="1"/>
</dbReference>
<dbReference type="PIRSF" id="PIRSF002181">
    <property type="entry name" value="Ribosomal_L13"/>
    <property type="match status" value="1"/>
</dbReference>
<dbReference type="SUPFAM" id="SSF52161">
    <property type="entry name" value="Ribosomal protein L13"/>
    <property type="match status" value="1"/>
</dbReference>
<organism>
    <name type="scientific">Agrobacterium fabrum (strain C58 / ATCC 33970)</name>
    <name type="common">Agrobacterium tumefaciens (strain C58)</name>
    <dbReference type="NCBI Taxonomy" id="176299"/>
    <lineage>
        <taxon>Bacteria</taxon>
        <taxon>Pseudomonadati</taxon>
        <taxon>Pseudomonadota</taxon>
        <taxon>Alphaproteobacteria</taxon>
        <taxon>Hyphomicrobiales</taxon>
        <taxon>Rhizobiaceae</taxon>
        <taxon>Rhizobium/Agrobacterium group</taxon>
        <taxon>Agrobacterium</taxon>
        <taxon>Agrobacterium tumefaciens complex</taxon>
    </lineage>
</organism>
<keyword id="KW-1185">Reference proteome</keyword>
<keyword id="KW-0687">Ribonucleoprotein</keyword>
<keyword id="KW-0689">Ribosomal protein</keyword>
<sequence>MSTFVQKPAEVEKKWIIIDAEGLVVGRLATIVATRLRGKHKATFTPHVDDGDNVIVINAEKVAFTGKKYSDKKYYWHTGHPGGIKERTARQIIEGRFPERVVEKAIERMIPRGPLGRRQMKNLRVYAGSNHPHEAQQPTVLDVAALNKKNVRSA</sequence>
<proteinExistence type="inferred from homology"/>
<comment type="function">
    <text evidence="1">This protein is one of the early assembly proteins of the 50S ribosomal subunit, although it is not seen to bind rRNA by itself. It is important during the early stages of 50S assembly.</text>
</comment>
<comment type="subunit">
    <text evidence="1">Part of the 50S ribosomal subunit.</text>
</comment>
<comment type="similarity">
    <text evidence="1">Belongs to the universal ribosomal protein uL13 family.</text>
</comment>
<reference key="1">
    <citation type="journal article" date="2001" name="Science">
        <title>The genome of the natural genetic engineer Agrobacterium tumefaciens C58.</title>
        <authorList>
            <person name="Wood D.W."/>
            <person name="Setubal J.C."/>
            <person name="Kaul R."/>
            <person name="Monks D.E."/>
            <person name="Kitajima J.P."/>
            <person name="Okura V.K."/>
            <person name="Zhou Y."/>
            <person name="Chen L."/>
            <person name="Wood G.E."/>
            <person name="Almeida N.F. Jr."/>
            <person name="Woo L."/>
            <person name="Chen Y."/>
            <person name="Paulsen I.T."/>
            <person name="Eisen J.A."/>
            <person name="Karp P.D."/>
            <person name="Bovee D. Sr."/>
            <person name="Chapman P."/>
            <person name="Clendenning J."/>
            <person name="Deatherage G."/>
            <person name="Gillet W."/>
            <person name="Grant C."/>
            <person name="Kutyavin T."/>
            <person name="Levy R."/>
            <person name="Li M.-J."/>
            <person name="McClelland E."/>
            <person name="Palmieri A."/>
            <person name="Raymond C."/>
            <person name="Rouse G."/>
            <person name="Saenphimmachak C."/>
            <person name="Wu Z."/>
            <person name="Romero P."/>
            <person name="Gordon D."/>
            <person name="Zhang S."/>
            <person name="Yoo H."/>
            <person name="Tao Y."/>
            <person name="Biddle P."/>
            <person name="Jung M."/>
            <person name="Krespan W."/>
            <person name="Perry M."/>
            <person name="Gordon-Kamm B."/>
            <person name="Liao L."/>
            <person name="Kim S."/>
            <person name="Hendrick C."/>
            <person name="Zhao Z.-Y."/>
            <person name="Dolan M."/>
            <person name="Chumley F."/>
            <person name="Tingey S.V."/>
            <person name="Tomb J.-F."/>
            <person name="Gordon M.P."/>
            <person name="Olson M.V."/>
            <person name="Nester E.W."/>
        </authorList>
    </citation>
    <scope>NUCLEOTIDE SEQUENCE [LARGE SCALE GENOMIC DNA]</scope>
    <source>
        <strain>C58 / ATCC 33970</strain>
    </source>
</reference>
<reference key="2">
    <citation type="journal article" date="2001" name="Science">
        <title>Genome sequence of the plant pathogen and biotechnology agent Agrobacterium tumefaciens C58.</title>
        <authorList>
            <person name="Goodner B."/>
            <person name="Hinkle G."/>
            <person name="Gattung S."/>
            <person name="Miller N."/>
            <person name="Blanchard M."/>
            <person name="Qurollo B."/>
            <person name="Goldman B.S."/>
            <person name="Cao Y."/>
            <person name="Askenazi M."/>
            <person name="Halling C."/>
            <person name="Mullin L."/>
            <person name="Houmiel K."/>
            <person name="Gordon J."/>
            <person name="Vaudin M."/>
            <person name="Iartchouk O."/>
            <person name="Epp A."/>
            <person name="Liu F."/>
            <person name="Wollam C."/>
            <person name="Allinger M."/>
            <person name="Doughty D."/>
            <person name="Scott C."/>
            <person name="Lappas C."/>
            <person name="Markelz B."/>
            <person name="Flanagan C."/>
            <person name="Crowell C."/>
            <person name="Gurson J."/>
            <person name="Lomo C."/>
            <person name="Sear C."/>
            <person name="Strub G."/>
            <person name="Cielo C."/>
            <person name="Slater S."/>
        </authorList>
    </citation>
    <scope>NUCLEOTIDE SEQUENCE [LARGE SCALE GENOMIC DNA]</scope>
    <source>
        <strain>C58 / ATCC 33970</strain>
    </source>
</reference>
<feature type="chain" id="PRO_0000261675" description="Large ribosomal subunit protein uL13">
    <location>
        <begin position="1"/>
        <end position="154"/>
    </location>
</feature>
<gene>
    <name evidence="1" type="primary">rplM</name>
    <name type="ordered locus">Atu1247</name>
    <name type="ORF">AGR_C_2301</name>
</gene>
<name>RL13_AGRFC</name>
<accession>Q8UFZ7</accession>
<accession>Q7CZN6</accession>
<protein>
    <recommendedName>
        <fullName evidence="1">Large ribosomal subunit protein uL13</fullName>
    </recommendedName>
    <alternativeName>
        <fullName evidence="2">50S ribosomal protein L13</fullName>
    </alternativeName>
</protein>
<evidence type="ECO:0000255" key="1">
    <source>
        <dbReference type="HAMAP-Rule" id="MF_01366"/>
    </source>
</evidence>
<evidence type="ECO:0000305" key="2"/>